<proteinExistence type="evidence at protein level"/>
<evidence type="ECO:0000250" key="1">
    <source>
        <dbReference type="UniProtKB" id="Q9F8A8"/>
    </source>
</evidence>
<evidence type="ECO:0000269" key="2">
    <source>
    </source>
</evidence>
<evidence type="ECO:0000269" key="3">
    <source>
    </source>
</evidence>
<evidence type="ECO:0000305" key="4"/>
<reference key="1">
    <citation type="journal article" date="2005" name="PLoS Genet.">
        <title>Life in hot carbon monoxide: the complete genome sequence of Carboxydothermus hydrogenoformans Z-2901.</title>
        <authorList>
            <person name="Wu M."/>
            <person name="Ren Q."/>
            <person name="Durkin A.S."/>
            <person name="Daugherty S.C."/>
            <person name="Brinkac L.M."/>
            <person name="Dodson R.J."/>
            <person name="Madupu R."/>
            <person name="Sullivan S.A."/>
            <person name="Kolonay J.F."/>
            <person name="Nelson W.C."/>
            <person name="Tallon L.J."/>
            <person name="Jones K.M."/>
            <person name="Ulrich L.E."/>
            <person name="Gonzalez J.M."/>
            <person name="Zhulin I.B."/>
            <person name="Robb F.T."/>
            <person name="Eisen J.A."/>
        </authorList>
    </citation>
    <scope>NUCLEOTIDE SEQUENCE [LARGE SCALE GENOMIC DNA]</scope>
    <source>
        <strain>ATCC BAA-161 / DSM 6008 / Z-2901</strain>
    </source>
</reference>
<reference key="2">
    <citation type="journal article" date="2001" name="J. Bacteriol.">
        <title>Two membrane-associated NiFeS-carbon monoxide dehydrogenases from the anaerobic carbon-monoxide-utilizing eubacterium Carboxydothermus hydrogenoformans.</title>
        <authorList>
            <person name="Svetlitchnyi V."/>
            <person name="Peschel C."/>
            <person name="Acker G."/>
            <person name="Meyer O."/>
        </authorList>
    </citation>
    <scope>PROTEIN SEQUENCE OF 2-21 AND 164-173</scope>
    <scope>FUNCTION</scope>
    <scope>CATALYTIC ACTIVITY</scope>
    <scope>SUBSTRATE SPECIFICITY</scope>
    <scope>SUBCELLULAR LOCATION</scope>
</reference>
<reference key="3">
    <citation type="journal article" date="2002" name="Eur. J. Biochem.">
        <title>Purification and catalytic properties of a CO-oxidizing:H2-evolving enzyme complex from Carboxydothermus hydrogenoformans.</title>
        <authorList>
            <person name="Soboh B."/>
            <person name="Linder D."/>
            <person name="Hedderich R."/>
        </authorList>
    </citation>
    <scope>PROTEIN SEQUENCE OF 3-25</scope>
    <scope>FUNCTION</scope>
    <scope>CATALYTIC ACTIVITY</scope>
</reference>
<protein>
    <recommendedName>
        <fullName>Carbon monoxide dehydrogenase 1</fullName>
        <shortName>CODH 1</shortName>
        <ecNumber evidence="2 3">1.2.7.4</ecNumber>
    </recommendedName>
</protein>
<comment type="function">
    <text evidence="2 3">CODH oxidizes carbon monoxide coupled, via CooF, to the reduction of a hydrogen cation by a hydrogenase (possibly CooH).</text>
</comment>
<comment type="catalytic activity">
    <reaction evidence="2 3">
        <text>CO + 2 oxidized [2Fe-2S]-[ferredoxin] + H2O = 2 reduced [2Fe-2S]-[ferredoxin] + CO2 + 2 H(+)</text>
        <dbReference type="Rhea" id="RHEA:21040"/>
        <dbReference type="Rhea" id="RHEA-COMP:10000"/>
        <dbReference type="Rhea" id="RHEA-COMP:10001"/>
        <dbReference type="ChEBI" id="CHEBI:15377"/>
        <dbReference type="ChEBI" id="CHEBI:15378"/>
        <dbReference type="ChEBI" id="CHEBI:16526"/>
        <dbReference type="ChEBI" id="CHEBI:17245"/>
        <dbReference type="ChEBI" id="CHEBI:33737"/>
        <dbReference type="ChEBI" id="CHEBI:33738"/>
        <dbReference type="EC" id="1.2.7.4"/>
    </reaction>
</comment>
<comment type="cofactor">
    <cofactor evidence="1">
        <name>[4Fe-4S] cluster</name>
        <dbReference type="ChEBI" id="CHEBI:49883"/>
    </cofactor>
    <text evidence="1">Binds 3 [4Fe-4S] clusters per homodimer.</text>
</comment>
<comment type="cofactor">
    <cofactor evidence="1">
        <name>[Ni-4Fe-5S] cluster</name>
        <dbReference type="ChEBI" id="CHEBI:177874"/>
    </cofactor>
    <text evidence="1">Binds 2 [Ni-4Fe-5S] clusters per homodimer.</text>
</comment>
<comment type="activity regulation">
    <text>Inactivated by O(2).</text>
</comment>
<comment type="subunit">
    <text evidence="1">Homodimer.</text>
</comment>
<comment type="subcellular location">
    <subcellularLocation>
        <location evidence="2">Cytoplasm</location>
    </subcellularLocation>
    <subcellularLocation>
        <location evidence="2">Cell membrane</location>
        <topology evidence="2">Peripheral membrane protein</topology>
        <orientation evidence="2">Cytoplasmic side</orientation>
    </subcellularLocation>
    <text>Loosely attached to the membrane, probably via CooF.</text>
</comment>
<comment type="domain">
    <text evidence="1">Cluster B is an all-cysteinyl-liganded 4Fe-4S cluster; cluster C is a mixed Ni-Fe-S cluster which is the active site of CO oxidation. Cluster D is also an all-cysteinyl-liganded 4Fe-4S cluster that bridges the two subunits of the CODH dimer.</text>
</comment>
<comment type="similarity">
    <text evidence="4">Belongs to the Ni-containing carbon monoxide dehydrogenase family.</text>
</comment>
<accession>P59934</accession>
<accession>Q3AB40</accession>
<gene>
    <name type="primary">cooS1</name>
    <name type="ordered locus">CHY_1824</name>
</gene>
<dbReference type="EC" id="1.2.7.4" evidence="2 3"/>
<dbReference type="EMBL" id="CP000141">
    <property type="protein sequence ID" value="ABB14432.1"/>
    <property type="molecule type" value="Genomic_DNA"/>
</dbReference>
<dbReference type="RefSeq" id="WP_011344718.1">
    <property type="nucleotide sequence ID" value="NC_007503.1"/>
</dbReference>
<dbReference type="SMR" id="P59934"/>
<dbReference type="STRING" id="246194.CHY_1824"/>
<dbReference type="KEGG" id="chy:CHY_1824"/>
<dbReference type="eggNOG" id="COG1151">
    <property type="taxonomic scope" value="Bacteria"/>
</dbReference>
<dbReference type="HOGENOM" id="CLU_030631_0_0_9"/>
<dbReference type="InParanoid" id="P59934"/>
<dbReference type="OrthoDB" id="5478720at2"/>
<dbReference type="Proteomes" id="UP000002706">
    <property type="component" value="Chromosome"/>
</dbReference>
<dbReference type="GO" id="GO:0005737">
    <property type="term" value="C:cytoplasm"/>
    <property type="evidence" value="ECO:0007669"/>
    <property type="project" value="UniProtKB-SubCell"/>
</dbReference>
<dbReference type="GO" id="GO:0005886">
    <property type="term" value="C:plasma membrane"/>
    <property type="evidence" value="ECO:0007669"/>
    <property type="project" value="UniProtKB-SubCell"/>
</dbReference>
<dbReference type="GO" id="GO:0051539">
    <property type="term" value="F:4 iron, 4 sulfur cluster binding"/>
    <property type="evidence" value="ECO:0007669"/>
    <property type="project" value="UniProtKB-KW"/>
</dbReference>
<dbReference type="GO" id="GO:0043885">
    <property type="term" value="F:anaerobic carbon-monoxide dehydrogenase activity"/>
    <property type="evidence" value="ECO:0007669"/>
    <property type="project" value="UniProtKB-EC"/>
</dbReference>
<dbReference type="GO" id="GO:0050418">
    <property type="term" value="F:hydroxylamine reductase activity"/>
    <property type="evidence" value="ECO:0007669"/>
    <property type="project" value="TreeGrafter"/>
</dbReference>
<dbReference type="GO" id="GO:0016151">
    <property type="term" value="F:nickel cation binding"/>
    <property type="evidence" value="ECO:0007669"/>
    <property type="project" value="InterPro"/>
</dbReference>
<dbReference type="GO" id="GO:0004601">
    <property type="term" value="F:peroxidase activity"/>
    <property type="evidence" value="ECO:0007669"/>
    <property type="project" value="TreeGrafter"/>
</dbReference>
<dbReference type="GO" id="GO:0006091">
    <property type="term" value="P:generation of precursor metabolites and energy"/>
    <property type="evidence" value="ECO:0007669"/>
    <property type="project" value="InterPro"/>
</dbReference>
<dbReference type="GO" id="GO:0042542">
    <property type="term" value="P:response to hydrogen peroxide"/>
    <property type="evidence" value="ECO:0007669"/>
    <property type="project" value="TreeGrafter"/>
</dbReference>
<dbReference type="CDD" id="cd01915">
    <property type="entry name" value="CODH"/>
    <property type="match status" value="1"/>
</dbReference>
<dbReference type="Gene3D" id="1.20.1270.30">
    <property type="match status" value="1"/>
</dbReference>
<dbReference type="Gene3D" id="3.40.50.2030">
    <property type="match status" value="2"/>
</dbReference>
<dbReference type="InterPro" id="IPR016101">
    <property type="entry name" value="CO_DH_a-bundle"/>
</dbReference>
<dbReference type="InterPro" id="IPR010047">
    <property type="entry name" value="CODH"/>
</dbReference>
<dbReference type="InterPro" id="IPR004137">
    <property type="entry name" value="HCP/CODH"/>
</dbReference>
<dbReference type="InterPro" id="IPR016099">
    <property type="entry name" value="Prismane-like_a/b-sand"/>
</dbReference>
<dbReference type="InterPro" id="IPR011254">
    <property type="entry name" value="Prismane-like_sf"/>
</dbReference>
<dbReference type="NCBIfam" id="TIGR01702">
    <property type="entry name" value="CO_DH_cata"/>
    <property type="match status" value="1"/>
</dbReference>
<dbReference type="PANTHER" id="PTHR30109:SF4">
    <property type="entry name" value="CARBON MONOXIDE DEHYDROGENASE"/>
    <property type="match status" value="1"/>
</dbReference>
<dbReference type="PANTHER" id="PTHR30109">
    <property type="entry name" value="HYDROXYLAMINE REDUCTASE"/>
    <property type="match status" value="1"/>
</dbReference>
<dbReference type="Pfam" id="PF03063">
    <property type="entry name" value="Prismane"/>
    <property type="match status" value="1"/>
</dbReference>
<dbReference type="PIRSF" id="PIRSF005023">
    <property type="entry name" value="CODH"/>
    <property type="match status" value="1"/>
</dbReference>
<dbReference type="SUPFAM" id="SSF56821">
    <property type="entry name" value="Prismane protein-like"/>
    <property type="match status" value="1"/>
</dbReference>
<organism>
    <name type="scientific">Carboxydothermus hydrogenoformans (strain ATCC BAA-161 / DSM 6008 / Z-2901)</name>
    <dbReference type="NCBI Taxonomy" id="246194"/>
    <lineage>
        <taxon>Bacteria</taxon>
        <taxon>Bacillati</taxon>
        <taxon>Bacillota</taxon>
        <taxon>Clostridia</taxon>
        <taxon>Thermoanaerobacterales</taxon>
        <taxon>Thermoanaerobacteraceae</taxon>
        <taxon>Carboxydothermus</taxon>
    </lineage>
</organism>
<name>COOS1_CARHZ</name>
<keyword id="KW-0004">4Fe-4S</keyword>
<keyword id="KW-1003">Cell membrane</keyword>
<keyword id="KW-0963">Cytoplasm</keyword>
<keyword id="KW-0903">Direct protein sequencing</keyword>
<keyword id="KW-0408">Iron</keyword>
<keyword id="KW-0411">Iron-sulfur</keyword>
<keyword id="KW-0472">Membrane</keyword>
<keyword id="KW-0479">Metal-binding</keyword>
<keyword id="KW-0533">Nickel</keyword>
<keyword id="KW-0560">Oxidoreductase</keyword>
<keyword id="KW-1185">Reference proteome</keyword>
<sequence>MSNWKNSVDPAVDYLLPIAKKAGIETAWDRYEAMQPQCGFGELGVCCRICWKGPCRIDPFGNGPQRGVCGADAHTIVARNLIRMIAAGAAAHSEHGRHIALTLLEVGEGHAPAYRIKDEQKLRKIAEKLNLAPAGKDIRQVAKEVALASLDDYSRQKRNVPCNWAKETLTAERVDKLAELGVMPHNIDAVITEIMGRTHVGCDADAVNLLLGGIKGALADYTGMCLSTELSDVIFGTPKPVITQANLGVLKEDAVNIAVHGHNPLLSEIICDVALKMNEEAKKAGAKEGINVVGICCTGNEVMMRRGIPLATNYLSQEMAIITGALDAMVVDVQCIMPALTSVAECFHTEIITTMAENKITGATHIEFREDSAVESAKKIVEVAIEAFKKRDKRKVNIPDCKQTAITGFSAEAIMAVLSKLNANDPLKPLIDNIINGNIQGIALFAGCNNPKAIHDNSFITIAKELAKNNVLMLATGCGAGAFAKNGLMTQEATEAYAGESLKAVLTALGKAAGLNGPLPLVLHMGSCVDNSRAVNVAVAIANKLGVDLDKLPLVASAPEFMSEKAVAIGTWAVTLGIPTHIGIVPQIMGSSVVVEFLTEKAKDLLGGYFIVETNPELAAAKLVAVIKERRRGLGI</sequence>
<feature type="initiator methionine" description="Removed" evidence="2">
    <location>
        <position position="1"/>
    </location>
</feature>
<feature type="chain" id="PRO_0000157137" description="Carbon monoxide dehydrogenase 1">
    <location>
        <begin position="2"/>
        <end position="636"/>
    </location>
</feature>
<feature type="binding site" evidence="1">
    <location>
        <position position="38"/>
    </location>
    <ligand>
        <name>[4Fe-4S] cluster</name>
        <dbReference type="ChEBI" id="CHEBI:49883"/>
        <label>1</label>
        <note>ligand shared between dimeric partners</note>
    </ligand>
</feature>
<feature type="binding site" evidence="1">
    <location>
        <position position="46"/>
    </location>
    <ligand>
        <name>[4Fe-4S] cluster</name>
        <dbReference type="ChEBI" id="CHEBI:49883"/>
        <label>1</label>
        <note>ligand shared between dimeric partners</note>
    </ligand>
</feature>
<feature type="binding site" evidence="1">
    <location>
        <position position="47"/>
    </location>
    <ligand>
        <name>[4Fe-4S] cluster</name>
        <dbReference type="ChEBI" id="CHEBI:49883"/>
        <label>2</label>
    </ligand>
</feature>
<feature type="binding site" evidence="1">
    <location>
        <position position="50"/>
    </location>
    <ligand>
        <name>[4Fe-4S] cluster</name>
        <dbReference type="ChEBI" id="CHEBI:49883"/>
        <label>2</label>
    </ligand>
</feature>
<feature type="binding site" evidence="1">
    <location>
        <position position="55"/>
    </location>
    <ligand>
        <name>[4Fe-4S] cluster</name>
        <dbReference type="ChEBI" id="CHEBI:49883"/>
        <label>2</label>
    </ligand>
</feature>
<feature type="binding site" evidence="1">
    <location>
        <position position="69"/>
    </location>
    <ligand>
        <name>[4Fe-4S] cluster</name>
        <dbReference type="ChEBI" id="CHEBI:49883"/>
        <label>2</label>
    </ligand>
</feature>
<feature type="binding site" evidence="1">
    <location>
        <position position="262"/>
    </location>
    <ligand>
        <name>[Ni-4Fe-5S] cluster</name>
        <dbReference type="ChEBI" id="CHEBI:177874"/>
    </ligand>
</feature>
<feature type="binding site" evidence="1">
    <location>
        <position position="297"/>
    </location>
    <ligand>
        <name>[Ni-4Fe-5S] cluster</name>
        <dbReference type="ChEBI" id="CHEBI:177874"/>
    </ligand>
</feature>
<feature type="binding site" evidence="1">
    <location>
        <position position="335"/>
    </location>
    <ligand>
        <name>[Ni-4Fe-5S] cluster</name>
        <dbReference type="ChEBI" id="CHEBI:177874"/>
    </ligand>
</feature>
<feature type="binding site" evidence="1">
    <location>
        <position position="448"/>
    </location>
    <ligand>
        <name>[Ni-4Fe-5S] cluster</name>
        <dbReference type="ChEBI" id="CHEBI:177874"/>
    </ligand>
</feature>
<feature type="binding site" evidence="1">
    <location>
        <position position="478"/>
    </location>
    <ligand>
        <name>[Ni-4Fe-5S] cluster</name>
        <dbReference type="ChEBI" id="CHEBI:177874"/>
    </ligand>
</feature>
<feature type="binding site" evidence="1">
    <location>
        <position position="528"/>
    </location>
    <ligand>
        <name>[Ni-4Fe-5S] cluster</name>
        <dbReference type="ChEBI" id="CHEBI:177874"/>
    </ligand>
</feature>
<feature type="sequence conflict" description="In Ref. 2; AA sequence." evidence="4" ref="2">
    <original>P</original>
    <variation>D</variation>
    <location>
        <position position="10"/>
    </location>
</feature>